<accession>P61264</accession>
<accession>A2RSB4</accession>
<accession>O35525</accession>
<accession>P32853</accession>
<gene>
    <name type="primary">Stx1b</name>
    <name type="synonym">Stx1b1</name>
    <name type="synonym">Stx1b2</name>
</gene>
<reference key="1">
    <citation type="submission" date="1995-01" db="EMBL/GenBank/DDBJ databases">
        <title>Cloning and sequence analysis of the various species HPC-1/syntaxin cDNA.</title>
        <authorList>
            <person name="Fujiwara T."/>
            <person name="Genda M."/>
            <person name="Nagai A."/>
            <person name="Okazaki M."/>
            <person name="Watanabe T."/>
            <person name="Nagamatsu S."/>
            <person name="Akagawa K."/>
        </authorList>
    </citation>
    <scope>NUCLEOTIDE SEQUENCE [MRNA]</scope>
    <source>
        <tissue>Brain</tissue>
    </source>
</reference>
<reference key="2">
    <citation type="submission" date="1995-08" db="EMBL/GenBank/DDBJ databases">
        <authorList>
            <person name="Horikawa H.P."/>
        </authorList>
    </citation>
    <scope>NUCLEOTIDE SEQUENCE [MRNA]</scope>
    <source>
        <strain>ICR</strain>
    </source>
</reference>
<reference key="3">
    <citation type="journal article" date="2009" name="PLoS Biol.">
        <title>Lineage-specific biology revealed by a finished genome assembly of the mouse.</title>
        <authorList>
            <person name="Church D.M."/>
            <person name="Goodstadt L."/>
            <person name="Hillier L.W."/>
            <person name="Zody M.C."/>
            <person name="Goldstein S."/>
            <person name="She X."/>
            <person name="Bult C.J."/>
            <person name="Agarwala R."/>
            <person name="Cherry J.L."/>
            <person name="DiCuccio M."/>
            <person name="Hlavina W."/>
            <person name="Kapustin Y."/>
            <person name="Meric P."/>
            <person name="Maglott D."/>
            <person name="Birtle Z."/>
            <person name="Marques A.C."/>
            <person name="Graves T."/>
            <person name="Zhou S."/>
            <person name="Teague B."/>
            <person name="Potamousis K."/>
            <person name="Churas C."/>
            <person name="Place M."/>
            <person name="Herschleb J."/>
            <person name="Runnheim R."/>
            <person name="Forrest D."/>
            <person name="Amos-Landgraf J."/>
            <person name="Schwartz D.C."/>
            <person name="Cheng Z."/>
            <person name="Lindblad-Toh K."/>
            <person name="Eichler E.E."/>
            <person name="Ponting C.P."/>
        </authorList>
    </citation>
    <scope>NUCLEOTIDE SEQUENCE [LARGE SCALE GENOMIC DNA]</scope>
    <source>
        <strain>C57BL/6J</strain>
    </source>
</reference>
<reference key="4">
    <citation type="journal article" date="2004" name="Genome Res.">
        <title>The status, quality, and expansion of the NIH full-length cDNA project: the Mammalian Gene Collection (MGC).</title>
        <authorList>
            <consortium name="The MGC Project Team"/>
        </authorList>
    </citation>
    <scope>NUCLEOTIDE SEQUENCE [LARGE SCALE MRNA]</scope>
</reference>
<reference key="5">
    <citation type="submission" date="2007-04" db="UniProtKB">
        <authorList>
            <person name="Lubec G."/>
            <person name="Kang S.U."/>
        </authorList>
    </citation>
    <scope>PROTEIN SEQUENCE OF 10-40; 46-69; 94-107; 125-139; 151-181; 189-197 AND 232-245</scope>
    <scope>IDENTIFICATION BY MASS SPECTROMETRY</scope>
    <source>
        <strain>C57BL/6J</strain>
        <tissue>Brain</tissue>
    </source>
</reference>
<reference key="6">
    <citation type="journal article" date="2005" name="J. Biol. Chem.">
        <title>Synaptotagmin VI and VIII and syntaxin 2 are essential for the mouse sperm acrosome reaction.</title>
        <authorList>
            <person name="Hutt D.M."/>
            <person name="Baltz J.M."/>
            <person name="Ngsee J.K."/>
        </authorList>
    </citation>
    <scope>FUNCTION</scope>
    <scope>INTERACTION WITH SYT6 AND SYT8</scope>
</reference>
<reference key="7">
    <citation type="journal article" date="2006" name="Cell">
        <title>Otoferlin, defective in a human deafness form, is essential for exocytosis at the auditory ribbon synapse.</title>
        <authorList>
            <person name="Roux I."/>
            <person name="Safieddine S."/>
            <person name="Nouvian R."/>
            <person name="Grati M."/>
            <person name="Simmler M.-C."/>
            <person name="Bahloul A."/>
            <person name="Perfettini I."/>
            <person name="Le Gall M."/>
            <person name="Rostaing P."/>
            <person name="Hamard G."/>
            <person name="Triller A."/>
            <person name="Avan P."/>
            <person name="Moser T."/>
            <person name="Petit C."/>
        </authorList>
    </citation>
    <scope>INTERACTION WITH OTOF</scope>
    <source>
        <strain>BALB/cJ</strain>
        <tissue>Cochlea</tissue>
    </source>
</reference>
<reference key="8">
    <citation type="journal article" date="2006" name="Mol. Cell. Proteomics">
        <title>Comprehensive identification of phosphorylation sites in postsynaptic density preparations.</title>
        <authorList>
            <person name="Trinidad J.C."/>
            <person name="Specht C.G."/>
            <person name="Thalhammer A."/>
            <person name="Schoepfer R."/>
            <person name="Burlingame A.L."/>
        </authorList>
    </citation>
    <scope>IDENTIFICATION BY MASS SPECTROMETRY [LARGE SCALE ANALYSIS]</scope>
    <source>
        <tissue>Brain</tissue>
    </source>
</reference>
<reference key="9">
    <citation type="journal article" date="2010" name="Cell">
        <title>A tissue-specific atlas of mouse protein phosphorylation and expression.</title>
        <authorList>
            <person name="Huttlin E.L."/>
            <person name="Jedrychowski M.P."/>
            <person name="Elias J.E."/>
            <person name="Goswami T."/>
            <person name="Rad R."/>
            <person name="Beausoleil S.A."/>
            <person name="Villen J."/>
            <person name="Haas W."/>
            <person name="Sowa M.E."/>
            <person name="Gygi S.P."/>
        </authorList>
    </citation>
    <scope>PHOSPHORYLATION [LARGE SCALE ANALYSIS] AT SER-10 AND SER-14</scope>
    <scope>IDENTIFICATION BY MASS SPECTROMETRY [LARGE SCALE ANALYSIS]</scope>
    <source>
        <tissue>Brain</tissue>
        <tissue>Brown adipose tissue</tissue>
        <tissue>Lung</tissue>
    </source>
</reference>
<name>STX1B_MOUSE</name>
<evidence type="ECO:0000250" key="1"/>
<evidence type="ECO:0000255" key="2"/>
<evidence type="ECO:0000255" key="3">
    <source>
        <dbReference type="PROSITE-ProRule" id="PRU00202"/>
    </source>
</evidence>
<evidence type="ECO:0000256" key="4">
    <source>
        <dbReference type="SAM" id="MobiDB-lite"/>
    </source>
</evidence>
<evidence type="ECO:0000269" key="5">
    <source>
    </source>
</evidence>
<evidence type="ECO:0000269" key="6">
    <source>
    </source>
</evidence>
<evidence type="ECO:0000305" key="7"/>
<evidence type="ECO:0007744" key="8">
    <source>
    </source>
</evidence>
<comment type="function">
    <text evidence="1 5">Potentially involved in docking of synaptic vesicles at presynaptic active zones (By similarity). May mediate Ca(2+)-regulation of exocytosis acrosomal reaction in sperm.</text>
</comment>
<comment type="subunit">
    <text evidence="5 6">Interacts with OTOF. Interacts with SYT6 and SYT8; the interaction is Ca(2+)-dependent.</text>
</comment>
<comment type="subcellular location">
    <subcellularLocation>
        <location evidence="7">Membrane</location>
        <topology evidence="7">Single-pass type IV membrane protein</topology>
    </subcellularLocation>
</comment>
<comment type="PTM">
    <text evidence="1">Phosphorylated by CK2.</text>
</comment>
<comment type="similarity">
    <text evidence="7">Belongs to the syntaxin family.</text>
</comment>
<feature type="chain" id="PRO_0000210193" description="Syntaxin-1B">
    <location>
        <begin position="1"/>
        <end position="288"/>
    </location>
</feature>
<feature type="topological domain" description="Cytoplasmic" evidence="2">
    <location>
        <begin position="1"/>
        <end position="264"/>
    </location>
</feature>
<feature type="transmembrane region" description="Helical; Anchor for type IV membrane protein" evidence="2">
    <location>
        <begin position="265"/>
        <end position="288"/>
    </location>
</feature>
<feature type="domain" description="t-SNARE coiled-coil homology" evidence="3">
    <location>
        <begin position="191"/>
        <end position="253"/>
    </location>
</feature>
<feature type="region of interest" description="Disordered" evidence="4">
    <location>
        <begin position="1"/>
        <end position="20"/>
    </location>
</feature>
<feature type="coiled-coil region" evidence="2">
    <location>
        <begin position="29"/>
        <end position="104"/>
    </location>
</feature>
<feature type="compositionally biased region" description="Basic and acidic residues" evidence="4">
    <location>
        <begin position="1"/>
        <end position="13"/>
    </location>
</feature>
<feature type="modified residue" description="Phosphoserine" evidence="8">
    <location>
        <position position="10"/>
    </location>
</feature>
<feature type="modified residue" description="Phosphoserine" evidence="8">
    <location>
        <position position="14"/>
    </location>
</feature>
<feature type="sequence conflict" description="In Ref. 1; BAA25986." evidence="7" ref="1">
    <original>DR</original>
    <variation>EW</variation>
    <location>
        <begin position="3"/>
        <end position="4"/>
    </location>
</feature>
<feature type="sequence conflict" description="In Ref. 1; BAA25986." evidence="7" ref="1">
    <original>L</original>
    <variation>R</variation>
    <location>
        <position position="8"/>
    </location>
</feature>
<feature type="sequence conflict" description="In Ref. 1; BAA25986." evidence="7" ref="1">
    <original>D</original>
    <variation>A</variation>
    <location>
        <position position="26"/>
    </location>
</feature>
<feature type="sequence conflict" description="In Ref. 1; BAA25986." evidence="7" ref="1">
    <original>D</original>
    <variation>A</variation>
    <location>
        <position position="30"/>
    </location>
</feature>
<feature type="sequence conflict" description="In Ref. 1; BAA25986." evidence="7" ref="1">
    <original>EQVKK</original>
    <variation>GRVGG</variation>
    <location>
        <begin position="51"/>
        <end position="55"/>
    </location>
</feature>
<feature type="sequence conflict" description="In Ref. 1; BAA25986." evidence="7" ref="1">
    <original>N</original>
    <variation>K</variation>
    <location>
        <position position="65"/>
    </location>
</feature>
<feature type="sequence conflict" description="In Ref. 1; BAA25986." evidence="7" ref="1">
    <original>S</original>
    <variation>G</variation>
    <location>
        <position position="98"/>
    </location>
</feature>
<feature type="sequence conflict" description="In Ref. 1; BAA25986." evidence="7" ref="1">
    <original>IRK</original>
    <variation>YRT</variation>
    <location>
        <begin position="114"/>
        <end position="116"/>
    </location>
</feature>
<feature type="sequence conflict" description="In Ref. 1; BAA25986." evidence="7" ref="1">
    <original>L</original>
    <variation>V</variation>
    <location>
        <position position="122"/>
    </location>
</feature>
<feature type="sequence conflict" description="In Ref. 1; BAA25986." evidence="7" ref="1">
    <original>K</original>
    <variation>N</variation>
    <location>
        <position position="125"/>
    </location>
</feature>
<feature type="sequence conflict" description="In Ref. 1; BAA25986." evidence="7" ref="1">
    <original>Q</original>
    <variation>K</variation>
    <location>
        <position position="137"/>
    </location>
</feature>
<feature type="sequence conflict" description="In Ref. 1; BAA25986." evidence="7" ref="1">
    <original>I</original>
    <variation>L</variation>
    <location>
        <position position="148"/>
    </location>
</feature>
<feature type="sequence conflict" description="In Ref. 1; BAA25986." evidence="7" ref="1">
    <original>L</original>
    <variation>R</variation>
    <location>
        <position position="191"/>
    </location>
</feature>
<proteinExistence type="evidence at protein level"/>
<organism>
    <name type="scientific">Mus musculus</name>
    <name type="common">Mouse</name>
    <dbReference type="NCBI Taxonomy" id="10090"/>
    <lineage>
        <taxon>Eukaryota</taxon>
        <taxon>Metazoa</taxon>
        <taxon>Chordata</taxon>
        <taxon>Craniata</taxon>
        <taxon>Vertebrata</taxon>
        <taxon>Euteleostomi</taxon>
        <taxon>Mammalia</taxon>
        <taxon>Eutheria</taxon>
        <taxon>Euarchontoglires</taxon>
        <taxon>Glires</taxon>
        <taxon>Rodentia</taxon>
        <taxon>Myomorpha</taxon>
        <taxon>Muroidea</taxon>
        <taxon>Muridae</taxon>
        <taxon>Murinae</taxon>
        <taxon>Mus</taxon>
        <taxon>Mus</taxon>
    </lineage>
</organism>
<sequence>MKDRTQELRSAKDSDDEEEVVHVDRDHFMDEFFEQVEEIRGCIEKLSEDVEQVKKQHSAILAAPNPDEKTKQELEDLTADIKKTANKVRSKLKAIEQSIEQEEGLNRSSADLRIRKTQHSTLSRKFVEVMTEYNATQSKYRDRCKDRIQRQLEITGRTTTNEELEDMLESGKLAIFTDDIKMDSQMTKQALNEIETRHNEIIKLETSIRELHDMFVDMAMLVESQGEMIDRIEYNVEHSVDYVERAVSDTKKAVKYQSKARRKKIMIIICCVVLGVVLASSIGGTLGL</sequence>
<keyword id="KW-0175">Coiled coil</keyword>
<keyword id="KW-0903">Direct protein sequencing</keyword>
<keyword id="KW-0472">Membrane</keyword>
<keyword id="KW-0532">Neurotransmitter transport</keyword>
<keyword id="KW-0597">Phosphoprotein</keyword>
<keyword id="KW-1185">Reference proteome</keyword>
<keyword id="KW-0812">Transmembrane</keyword>
<keyword id="KW-1133">Transmembrane helix</keyword>
<keyword id="KW-0813">Transport</keyword>
<dbReference type="EMBL" id="D45207">
    <property type="protein sequence ID" value="BAA25986.1"/>
    <property type="molecule type" value="mRNA"/>
</dbReference>
<dbReference type="EMBL" id="D29743">
    <property type="protein sequence ID" value="BAA06162.1"/>
    <property type="molecule type" value="mRNA"/>
</dbReference>
<dbReference type="EMBL" id="AC149222">
    <property type="status" value="NOT_ANNOTATED_CDS"/>
    <property type="molecule type" value="Genomic_DNA"/>
</dbReference>
<dbReference type="EMBL" id="BC132042">
    <property type="protein sequence ID" value="AAI32043.1"/>
    <property type="molecule type" value="mRNA"/>
</dbReference>
<dbReference type="EMBL" id="BC132068">
    <property type="protein sequence ID" value="AAI32069.1"/>
    <property type="molecule type" value="mRNA"/>
</dbReference>
<dbReference type="CCDS" id="CCDS40146.1"/>
<dbReference type="RefSeq" id="NP_077725.1">
    <property type="nucleotide sequence ID" value="NM_024414.2"/>
</dbReference>
<dbReference type="SMR" id="P61264"/>
<dbReference type="BioGRID" id="207850">
    <property type="interactions" value="16"/>
</dbReference>
<dbReference type="FunCoup" id="P61264">
    <property type="interactions" value="751"/>
</dbReference>
<dbReference type="IntAct" id="P61264">
    <property type="interactions" value="6"/>
</dbReference>
<dbReference type="MINT" id="P61264"/>
<dbReference type="STRING" id="10090.ENSMUSP00000101874"/>
<dbReference type="GlyGen" id="P61264">
    <property type="glycosylation" value="3 sites, 2 N-linked glycans (2 sites), 1 O-linked glycan (1 site)"/>
</dbReference>
<dbReference type="iPTMnet" id="P61264"/>
<dbReference type="MetOSite" id="P61264"/>
<dbReference type="PhosphoSitePlus" id="P61264"/>
<dbReference type="SwissPalm" id="P61264"/>
<dbReference type="jPOST" id="P61264"/>
<dbReference type="PaxDb" id="10090-ENSMUSP00000101874"/>
<dbReference type="PeptideAtlas" id="P61264"/>
<dbReference type="ProteomicsDB" id="257504"/>
<dbReference type="Antibodypedia" id="67397">
    <property type="antibodies" value="42 antibodies from 17 providers"/>
</dbReference>
<dbReference type="DNASU" id="56216"/>
<dbReference type="Ensembl" id="ENSMUST00000106267.5">
    <property type="protein sequence ID" value="ENSMUSP00000101874.4"/>
    <property type="gene ID" value="ENSMUSG00000030806.7"/>
</dbReference>
<dbReference type="GeneID" id="56216"/>
<dbReference type="KEGG" id="mmu:56216"/>
<dbReference type="UCSC" id="uc009jwx.1">
    <property type="organism name" value="mouse"/>
</dbReference>
<dbReference type="AGR" id="MGI:1930705"/>
<dbReference type="CTD" id="112755"/>
<dbReference type="MGI" id="MGI:1930705">
    <property type="gene designation" value="Stx1b"/>
</dbReference>
<dbReference type="VEuPathDB" id="HostDB:ENSMUSG00000030806"/>
<dbReference type="eggNOG" id="KOG0810">
    <property type="taxonomic scope" value="Eukaryota"/>
</dbReference>
<dbReference type="GeneTree" id="ENSGT01030000234627"/>
<dbReference type="HOGENOM" id="CLU_042423_2_2_1"/>
<dbReference type="InParanoid" id="P61264"/>
<dbReference type="OMA" id="RWICFIL"/>
<dbReference type="OrthoDB" id="10255013at2759"/>
<dbReference type="PhylomeDB" id="P61264"/>
<dbReference type="TreeFam" id="TF313763"/>
<dbReference type="Reactome" id="R-MMU-5682910">
    <property type="pathway name" value="LGI-ADAM interactions"/>
</dbReference>
<dbReference type="BioGRID-ORCS" id="56216">
    <property type="hits" value="2 hits in 78 CRISPR screens"/>
</dbReference>
<dbReference type="CD-CODE" id="CE726F99">
    <property type="entry name" value="Postsynaptic density"/>
</dbReference>
<dbReference type="ChiTaRS" id="Stx1b">
    <property type="organism name" value="mouse"/>
</dbReference>
<dbReference type="PRO" id="PR:P61264"/>
<dbReference type="Proteomes" id="UP000000589">
    <property type="component" value="Chromosome 7"/>
</dbReference>
<dbReference type="RNAct" id="P61264">
    <property type="molecule type" value="protein"/>
</dbReference>
<dbReference type="Bgee" id="ENSMUSG00000030806">
    <property type="expression patterns" value="Expressed in superior frontal gyrus and 131 other cell types or tissues"/>
</dbReference>
<dbReference type="ExpressionAtlas" id="P61264">
    <property type="expression patterns" value="baseline and differential"/>
</dbReference>
<dbReference type="GO" id="GO:0030424">
    <property type="term" value="C:axon"/>
    <property type="evidence" value="ECO:0000314"/>
    <property type="project" value="SynGO-UCL"/>
</dbReference>
<dbReference type="GO" id="GO:0016020">
    <property type="term" value="C:membrane"/>
    <property type="evidence" value="ECO:0000314"/>
    <property type="project" value="MGI"/>
</dbReference>
<dbReference type="GO" id="GO:0031594">
    <property type="term" value="C:neuromuscular junction"/>
    <property type="evidence" value="ECO:0000314"/>
    <property type="project" value="SynGO"/>
</dbReference>
<dbReference type="GO" id="GO:0005886">
    <property type="term" value="C:plasma membrane"/>
    <property type="evidence" value="ECO:0000315"/>
    <property type="project" value="ParkinsonsUK-UCL"/>
</dbReference>
<dbReference type="GO" id="GO:0098793">
    <property type="term" value="C:presynapse"/>
    <property type="evidence" value="ECO:0000315"/>
    <property type="project" value="ParkinsonsUK-UCL"/>
</dbReference>
<dbReference type="GO" id="GO:0048787">
    <property type="term" value="C:presynaptic active zone membrane"/>
    <property type="evidence" value="ECO:0000314"/>
    <property type="project" value="SynGO"/>
</dbReference>
<dbReference type="GO" id="GO:0042734">
    <property type="term" value="C:presynaptic membrane"/>
    <property type="evidence" value="ECO:0000305"/>
    <property type="project" value="SynGO-UCL"/>
</dbReference>
<dbReference type="GO" id="GO:0019901">
    <property type="term" value="F:protein kinase binding"/>
    <property type="evidence" value="ECO:0000353"/>
    <property type="project" value="ParkinsonsUK-UCL"/>
</dbReference>
<dbReference type="GO" id="GO:0005102">
    <property type="term" value="F:signaling receptor binding"/>
    <property type="evidence" value="ECO:0000353"/>
    <property type="project" value="ParkinsonsUK-UCL"/>
</dbReference>
<dbReference type="GO" id="GO:0005484">
    <property type="term" value="F:SNAP receptor activity"/>
    <property type="evidence" value="ECO:0007669"/>
    <property type="project" value="InterPro"/>
</dbReference>
<dbReference type="GO" id="GO:0048791">
    <property type="term" value="P:calcium ion-regulated exocytosis of neurotransmitter"/>
    <property type="evidence" value="ECO:0000315"/>
    <property type="project" value="ParkinsonsUK-UCL"/>
</dbReference>
<dbReference type="GO" id="GO:0006886">
    <property type="term" value="P:intracellular protein transport"/>
    <property type="evidence" value="ECO:0007669"/>
    <property type="project" value="InterPro"/>
</dbReference>
<dbReference type="GO" id="GO:1905302">
    <property type="term" value="P:negative regulation of macropinocytosis"/>
    <property type="evidence" value="ECO:0000250"/>
    <property type="project" value="ParkinsonsUK-UCL"/>
</dbReference>
<dbReference type="GO" id="GO:0010977">
    <property type="term" value="P:negative regulation of neuron projection development"/>
    <property type="evidence" value="ECO:0000250"/>
    <property type="project" value="ParkinsonsUK-UCL"/>
</dbReference>
<dbReference type="GO" id="GO:1903422">
    <property type="term" value="P:negative regulation of synaptic vesicle recycling"/>
    <property type="evidence" value="ECO:0000315"/>
    <property type="project" value="ParkinsonsUK-UCL"/>
</dbReference>
<dbReference type="GO" id="GO:2000463">
    <property type="term" value="P:positive regulation of excitatory postsynaptic potential"/>
    <property type="evidence" value="ECO:0000316"/>
    <property type="project" value="ParkinsonsUK-UCL"/>
</dbReference>
<dbReference type="GO" id="GO:0001956">
    <property type="term" value="P:positive regulation of neurotransmitter secretion"/>
    <property type="evidence" value="ECO:0000316"/>
    <property type="project" value="ParkinsonsUK-UCL"/>
</dbReference>
<dbReference type="GO" id="GO:1904050">
    <property type="term" value="P:positive regulation of spontaneous neurotransmitter secretion"/>
    <property type="evidence" value="ECO:0000315"/>
    <property type="project" value="ParkinsonsUK-UCL"/>
</dbReference>
<dbReference type="GO" id="GO:0010468">
    <property type="term" value="P:regulation of gene expression"/>
    <property type="evidence" value="ECO:0000315"/>
    <property type="project" value="ParkinsonsUK-UCL"/>
</dbReference>
<dbReference type="GO" id="GO:0060025">
    <property type="term" value="P:regulation of synaptic activity"/>
    <property type="evidence" value="ECO:0000250"/>
    <property type="project" value="ParkinsonsUK-UCL"/>
</dbReference>
<dbReference type="GO" id="GO:0010807">
    <property type="term" value="P:regulation of synaptic vesicle priming"/>
    <property type="evidence" value="ECO:0000316"/>
    <property type="project" value="ParkinsonsUK-UCL"/>
</dbReference>
<dbReference type="GO" id="GO:0061669">
    <property type="term" value="P:spontaneous neurotransmitter secretion"/>
    <property type="evidence" value="ECO:0000315"/>
    <property type="project" value="ParkinsonsUK-UCL"/>
</dbReference>
<dbReference type="GO" id="GO:0016081">
    <property type="term" value="P:synaptic vesicle docking"/>
    <property type="evidence" value="ECO:0000315"/>
    <property type="project" value="ParkinsonsUK-UCL"/>
</dbReference>
<dbReference type="GO" id="GO:0016079">
    <property type="term" value="P:synaptic vesicle exocytosis"/>
    <property type="evidence" value="ECO:0000314"/>
    <property type="project" value="SynGO"/>
</dbReference>
<dbReference type="GO" id="GO:0031629">
    <property type="term" value="P:synaptic vesicle fusion to presynaptic active zone membrane"/>
    <property type="evidence" value="ECO:0000314"/>
    <property type="project" value="SynGO"/>
</dbReference>
<dbReference type="GO" id="GO:0006904">
    <property type="term" value="P:vesicle docking involved in exocytosis"/>
    <property type="evidence" value="ECO:0000315"/>
    <property type="project" value="ParkinsonsUK-UCL"/>
</dbReference>
<dbReference type="CDD" id="cd15880">
    <property type="entry name" value="SNARE_syntaxin1"/>
    <property type="match status" value="1"/>
</dbReference>
<dbReference type="CDD" id="cd00179">
    <property type="entry name" value="SynN"/>
    <property type="match status" value="1"/>
</dbReference>
<dbReference type="FunFam" id="1.20.58.70:FF:000042">
    <property type="entry name" value="Syntaxin 11b, tandem duplicate 2"/>
    <property type="match status" value="1"/>
</dbReference>
<dbReference type="FunFam" id="1.20.5.110:FF:000005">
    <property type="entry name" value="Syntaxin 1B"/>
    <property type="match status" value="1"/>
</dbReference>
<dbReference type="Gene3D" id="1.20.5.110">
    <property type="match status" value="1"/>
</dbReference>
<dbReference type="Gene3D" id="1.20.58.70">
    <property type="match status" value="1"/>
</dbReference>
<dbReference type="InterPro" id="IPR010989">
    <property type="entry name" value="SNARE"/>
</dbReference>
<dbReference type="InterPro" id="IPR045242">
    <property type="entry name" value="Syntaxin"/>
</dbReference>
<dbReference type="InterPro" id="IPR006012">
    <property type="entry name" value="Syntaxin/epimorphin_CS"/>
</dbReference>
<dbReference type="InterPro" id="IPR006011">
    <property type="entry name" value="Syntaxin_N"/>
</dbReference>
<dbReference type="InterPro" id="IPR000727">
    <property type="entry name" value="T_SNARE_dom"/>
</dbReference>
<dbReference type="PANTHER" id="PTHR19957">
    <property type="entry name" value="SYNTAXIN"/>
    <property type="match status" value="1"/>
</dbReference>
<dbReference type="PANTHER" id="PTHR19957:SF334">
    <property type="entry name" value="SYNTAXIN-1B"/>
    <property type="match status" value="1"/>
</dbReference>
<dbReference type="Pfam" id="PF05739">
    <property type="entry name" value="SNARE"/>
    <property type="match status" value="1"/>
</dbReference>
<dbReference type="Pfam" id="PF00804">
    <property type="entry name" value="Syntaxin"/>
    <property type="match status" value="1"/>
</dbReference>
<dbReference type="SMART" id="SM00503">
    <property type="entry name" value="SynN"/>
    <property type="match status" value="1"/>
</dbReference>
<dbReference type="SMART" id="SM00397">
    <property type="entry name" value="t_SNARE"/>
    <property type="match status" value="1"/>
</dbReference>
<dbReference type="SUPFAM" id="SSF47661">
    <property type="entry name" value="t-snare proteins"/>
    <property type="match status" value="1"/>
</dbReference>
<dbReference type="PROSITE" id="PS00914">
    <property type="entry name" value="SYNTAXIN"/>
    <property type="match status" value="1"/>
</dbReference>
<dbReference type="PROSITE" id="PS50192">
    <property type="entry name" value="T_SNARE"/>
    <property type="match status" value="1"/>
</dbReference>
<protein>
    <recommendedName>
        <fullName>Syntaxin-1B</fullName>
    </recommendedName>
</protein>